<name>HIS6_BORPA</name>
<proteinExistence type="inferred from homology"/>
<keyword id="KW-0028">Amino-acid biosynthesis</keyword>
<keyword id="KW-0963">Cytoplasm</keyword>
<keyword id="KW-0368">Histidine biosynthesis</keyword>
<keyword id="KW-0456">Lyase</keyword>
<evidence type="ECO:0000255" key="1">
    <source>
        <dbReference type="HAMAP-Rule" id="MF_01013"/>
    </source>
</evidence>
<organism>
    <name type="scientific">Bordetella parapertussis (strain 12822 / ATCC BAA-587 / NCTC 13253)</name>
    <dbReference type="NCBI Taxonomy" id="257311"/>
    <lineage>
        <taxon>Bacteria</taxon>
        <taxon>Pseudomonadati</taxon>
        <taxon>Pseudomonadota</taxon>
        <taxon>Betaproteobacteria</taxon>
        <taxon>Burkholderiales</taxon>
        <taxon>Alcaligenaceae</taxon>
        <taxon>Bordetella</taxon>
    </lineage>
</organism>
<sequence length="269" mass="28302">MNASRIAAAGASTLTRRIIPCLDVTAGRVVKGVNFVNLTDAGDPVEIARRYNEQGADELTFLDITATSDGHDLILPIIEQVASQVFIPLTVGGGVRQVSDVQRLLNAGADKISINSAAVANPELVRAAADYHGSQCIVVAIDARRSSAEGEPARWEVFTHGGRKATGLDAVAWARRMAAYGAGEILLTSMDRDGTKSGFDLELTRAVSDAVPVPVIASGGVGNLQHLADGVTTGRASAVLAASIFHFGQHTVRECKQYMAERGIAVRLT</sequence>
<accession>Q7W2X9</accession>
<feature type="chain" id="PRO_0000142127" description="Imidazole glycerol phosphate synthase subunit HisF">
    <location>
        <begin position="1"/>
        <end position="269"/>
    </location>
</feature>
<feature type="active site" evidence="1">
    <location>
        <position position="23"/>
    </location>
</feature>
<feature type="active site" evidence="1">
    <location>
        <position position="142"/>
    </location>
</feature>
<comment type="function">
    <text evidence="1">IGPS catalyzes the conversion of PRFAR and glutamine to IGP, AICAR and glutamate. The HisF subunit catalyzes the cyclization activity that produces IGP and AICAR from PRFAR using the ammonia provided by the HisH subunit.</text>
</comment>
<comment type="catalytic activity">
    <reaction evidence="1">
        <text>5-[(5-phospho-1-deoxy-D-ribulos-1-ylimino)methylamino]-1-(5-phospho-beta-D-ribosyl)imidazole-4-carboxamide + L-glutamine = D-erythro-1-(imidazol-4-yl)glycerol 3-phosphate + 5-amino-1-(5-phospho-beta-D-ribosyl)imidazole-4-carboxamide + L-glutamate + H(+)</text>
        <dbReference type="Rhea" id="RHEA:24793"/>
        <dbReference type="ChEBI" id="CHEBI:15378"/>
        <dbReference type="ChEBI" id="CHEBI:29985"/>
        <dbReference type="ChEBI" id="CHEBI:58278"/>
        <dbReference type="ChEBI" id="CHEBI:58359"/>
        <dbReference type="ChEBI" id="CHEBI:58475"/>
        <dbReference type="ChEBI" id="CHEBI:58525"/>
        <dbReference type="EC" id="4.3.2.10"/>
    </reaction>
</comment>
<comment type="pathway">
    <text evidence="1">Amino-acid biosynthesis; L-histidine biosynthesis; L-histidine from 5-phospho-alpha-D-ribose 1-diphosphate: step 5/9.</text>
</comment>
<comment type="subunit">
    <text evidence="1">Heterodimer of HisH and HisF.</text>
</comment>
<comment type="subcellular location">
    <subcellularLocation>
        <location evidence="1">Cytoplasm</location>
    </subcellularLocation>
</comment>
<comment type="similarity">
    <text evidence="1">Belongs to the HisA/HisF family.</text>
</comment>
<dbReference type="EC" id="4.3.2.10" evidence="1"/>
<dbReference type="EMBL" id="BX640436">
    <property type="protein sequence ID" value="CAE39551.1"/>
    <property type="molecule type" value="Genomic_DNA"/>
</dbReference>
<dbReference type="RefSeq" id="WP_010929471.1">
    <property type="nucleotide sequence ID" value="NC_002928.3"/>
</dbReference>
<dbReference type="SMR" id="Q7W2X9"/>
<dbReference type="GeneID" id="93206069"/>
<dbReference type="KEGG" id="bpa:BPP4272"/>
<dbReference type="HOGENOM" id="CLU_048577_4_0_4"/>
<dbReference type="UniPathway" id="UPA00031">
    <property type="reaction ID" value="UER00010"/>
</dbReference>
<dbReference type="Proteomes" id="UP000001421">
    <property type="component" value="Chromosome"/>
</dbReference>
<dbReference type="GO" id="GO:0005737">
    <property type="term" value="C:cytoplasm"/>
    <property type="evidence" value="ECO:0007669"/>
    <property type="project" value="UniProtKB-SubCell"/>
</dbReference>
<dbReference type="GO" id="GO:0000107">
    <property type="term" value="F:imidazoleglycerol-phosphate synthase activity"/>
    <property type="evidence" value="ECO:0007669"/>
    <property type="project" value="UniProtKB-UniRule"/>
</dbReference>
<dbReference type="GO" id="GO:0016829">
    <property type="term" value="F:lyase activity"/>
    <property type="evidence" value="ECO:0007669"/>
    <property type="project" value="UniProtKB-KW"/>
</dbReference>
<dbReference type="GO" id="GO:0000105">
    <property type="term" value="P:L-histidine biosynthetic process"/>
    <property type="evidence" value="ECO:0007669"/>
    <property type="project" value="UniProtKB-UniRule"/>
</dbReference>
<dbReference type="CDD" id="cd04731">
    <property type="entry name" value="HisF"/>
    <property type="match status" value="1"/>
</dbReference>
<dbReference type="FunFam" id="3.20.20.70:FF:000006">
    <property type="entry name" value="Imidazole glycerol phosphate synthase subunit HisF"/>
    <property type="match status" value="1"/>
</dbReference>
<dbReference type="Gene3D" id="3.20.20.70">
    <property type="entry name" value="Aldolase class I"/>
    <property type="match status" value="1"/>
</dbReference>
<dbReference type="HAMAP" id="MF_01013">
    <property type="entry name" value="HisF"/>
    <property type="match status" value="1"/>
</dbReference>
<dbReference type="InterPro" id="IPR013785">
    <property type="entry name" value="Aldolase_TIM"/>
</dbReference>
<dbReference type="InterPro" id="IPR006062">
    <property type="entry name" value="His_biosynth"/>
</dbReference>
<dbReference type="InterPro" id="IPR004651">
    <property type="entry name" value="HisF"/>
</dbReference>
<dbReference type="InterPro" id="IPR050064">
    <property type="entry name" value="IGPS_HisA/HisF"/>
</dbReference>
<dbReference type="InterPro" id="IPR011060">
    <property type="entry name" value="RibuloseP-bd_barrel"/>
</dbReference>
<dbReference type="NCBIfam" id="TIGR00735">
    <property type="entry name" value="hisF"/>
    <property type="match status" value="1"/>
</dbReference>
<dbReference type="PANTHER" id="PTHR21235:SF2">
    <property type="entry name" value="IMIDAZOLE GLYCEROL PHOSPHATE SYNTHASE HISHF"/>
    <property type="match status" value="1"/>
</dbReference>
<dbReference type="PANTHER" id="PTHR21235">
    <property type="entry name" value="IMIDAZOLE GLYCEROL PHOSPHATE SYNTHASE SUBUNIT HISF/H IGP SYNTHASE SUBUNIT HISF/H"/>
    <property type="match status" value="1"/>
</dbReference>
<dbReference type="Pfam" id="PF00977">
    <property type="entry name" value="His_biosynth"/>
    <property type="match status" value="1"/>
</dbReference>
<dbReference type="SUPFAM" id="SSF51366">
    <property type="entry name" value="Ribulose-phoshate binding barrel"/>
    <property type="match status" value="1"/>
</dbReference>
<gene>
    <name evidence="1" type="primary">hisF</name>
    <name type="ordered locus">BPP4272</name>
</gene>
<protein>
    <recommendedName>
        <fullName evidence="1">Imidazole glycerol phosphate synthase subunit HisF</fullName>
        <ecNumber evidence="1">4.3.2.10</ecNumber>
    </recommendedName>
    <alternativeName>
        <fullName evidence="1">IGP synthase cyclase subunit</fullName>
    </alternativeName>
    <alternativeName>
        <fullName evidence="1">IGP synthase subunit HisF</fullName>
    </alternativeName>
    <alternativeName>
        <fullName evidence="1">ImGP synthase subunit HisF</fullName>
        <shortName evidence="1">IGPS subunit HisF</shortName>
    </alternativeName>
</protein>
<reference key="1">
    <citation type="journal article" date="2003" name="Nat. Genet.">
        <title>Comparative analysis of the genome sequences of Bordetella pertussis, Bordetella parapertussis and Bordetella bronchiseptica.</title>
        <authorList>
            <person name="Parkhill J."/>
            <person name="Sebaihia M."/>
            <person name="Preston A."/>
            <person name="Murphy L.D."/>
            <person name="Thomson N.R."/>
            <person name="Harris D.E."/>
            <person name="Holden M.T.G."/>
            <person name="Churcher C.M."/>
            <person name="Bentley S.D."/>
            <person name="Mungall K.L."/>
            <person name="Cerdeno-Tarraga A.-M."/>
            <person name="Temple L."/>
            <person name="James K.D."/>
            <person name="Harris B."/>
            <person name="Quail M.A."/>
            <person name="Achtman M."/>
            <person name="Atkin R."/>
            <person name="Baker S."/>
            <person name="Basham D."/>
            <person name="Bason N."/>
            <person name="Cherevach I."/>
            <person name="Chillingworth T."/>
            <person name="Collins M."/>
            <person name="Cronin A."/>
            <person name="Davis P."/>
            <person name="Doggett J."/>
            <person name="Feltwell T."/>
            <person name="Goble A."/>
            <person name="Hamlin N."/>
            <person name="Hauser H."/>
            <person name="Holroyd S."/>
            <person name="Jagels K."/>
            <person name="Leather S."/>
            <person name="Moule S."/>
            <person name="Norberczak H."/>
            <person name="O'Neil S."/>
            <person name="Ormond D."/>
            <person name="Price C."/>
            <person name="Rabbinowitsch E."/>
            <person name="Rutter S."/>
            <person name="Sanders M."/>
            <person name="Saunders D."/>
            <person name="Seeger K."/>
            <person name="Sharp S."/>
            <person name="Simmonds M."/>
            <person name="Skelton J."/>
            <person name="Squares R."/>
            <person name="Squares S."/>
            <person name="Stevens K."/>
            <person name="Unwin L."/>
            <person name="Whitehead S."/>
            <person name="Barrell B.G."/>
            <person name="Maskell D.J."/>
        </authorList>
    </citation>
    <scope>NUCLEOTIDE SEQUENCE [LARGE SCALE GENOMIC DNA]</scope>
    <source>
        <strain>12822 / ATCC BAA-587 / NCTC 13253</strain>
    </source>
</reference>